<proteinExistence type="inferred from homology"/>
<sequence length="345" mass="37482">MKNDLFLRVLRGEKVERTPVWIMRQAGRYLAEYRKLRAKVPHFLDVCRNPELACELALQPLQRFPLDAAILFSDILTIPDAMGLGLSFVAGEGPQFAKPLRSSAAIESLTLPPSGSLDYVFAAVSATKRALNDRVPLIGFAGSPWTLAAYMIEGGASKDFAFAKSFAFSQPQAMDVLLTQLTCAITDYLRGQIKAGAQAVMIFDSWGGVLPYWAYEQFSLPYLKKIVAAVHTVAPVIVFTKGGGLWLAAQKTIGAAALGVDWTVSLAAARKIVGESIVLQGNLDPTFLMTDPKTIRQAVAKTLADYGNGHRYIFNLGHGITPNASPDNVAAMIEAVHELSPQYHQ</sequence>
<reference key="1">
    <citation type="journal article" date="2007" name="Nat. Biotechnol.">
        <title>Genome sequence and identification of candidate vaccine antigens from the animal pathogen Dichelobacter nodosus.</title>
        <authorList>
            <person name="Myers G.S.A."/>
            <person name="Parker D."/>
            <person name="Al-Hasani K."/>
            <person name="Kennan R.M."/>
            <person name="Seemann T."/>
            <person name="Ren Q."/>
            <person name="Badger J.H."/>
            <person name="Selengut J.D."/>
            <person name="Deboy R.T."/>
            <person name="Tettelin H."/>
            <person name="Boyce J.D."/>
            <person name="McCarl V.P."/>
            <person name="Han X."/>
            <person name="Nelson W.C."/>
            <person name="Madupu R."/>
            <person name="Mohamoud Y."/>
            <person name="Holley T."/>
            <person name="Fedorova N."/>
            <person name="Khouri H."/>
            <person name="Bottomley S.P."/>
            <person name="Whittington R.J."/>
            <person name="Adler B."/>
            <person name="Songer J.G."/>
            <person name="Rood J.I."/>
            <person name="Paulsen I.T."/>
        </authorList>
    </citation>
    <scope>NUCLEOTIDE SEQUENCE [LARGE SCALE GENOMIC DNA]</scope>
    <source>
        <strain>VCS1703A</strain>
    </source>
</reference>
<name>DCUP_DICNV</name>
<comment type="function">
    <text evidence="1">Catalyzes the decarboxylation of four acetate groups of uroporphyrinogen-III to yield coproporphyrinogen-III.</text>
</comment>
<comment type="catalytic activity">
    <reaction evidence="1">
        <text>uroporphyrinogen III + 4 H(+) = coproporphyrinogen III + 4 CO2</text>
        <dbReference type="Rhea" id="RHEA:19865"/>
        <dbReference type="ChEBI" id="CHEBI:15378"/>
        <dbReference type="ChEBI" id="CHEBI:16526"/>
        <dbReference type="ChEBI" id="CHEBI:57308"/>
        <dbReference type="ChEBI" id="CHEBI:57309"/>
        <dbReference type="EC" id="4.1.1.37"/>
    </reaction>
</comment>
<comment type="pathway">
    <text evidence="1">Porphyrin-containing compound metabolism; protoporphyrin-IX biosynthesis; coproporphyrinogen-III from 5-aminolevulinate: step 4/4.</text>
</comment>
<comment type="subunit">
    <text evidence="1">Homodimer.</text>
</comment>
<comment type="subcellular location">
    <subcellularLocation>
        <location evidence="1">Cytoplasm</location>
    </subcellularLocation>
</comment>
<comment type="similarity">
    <text evidence="1">Belongs to the uroporphyrinogen decarboxylase family.</text>
</comment>
<evidence type="ECO:0000255" key="1">
    <source>
        <dbReference type="HAMAP-Rule" id="MF_00218"/>
    </source>
</evidence>
<protein>
    <recommendedName>
        <fullName evidence="1">Uroporphyrinogen decarboxylase</fullName>
        <shortName evidence="1">UPD</shortName>
        <shortName evidence="1">URO-D</shortName>
        <ecNumber evidence="1">4.1.1.37</ecNumber>
    </recommendedName>
</protein>
<keyword id="KW-0963">Cytoplasm</keyword>
<keyword id="KW-0210">Decarboxylase</keyword>
<keyword id="KW-0456">Lyase</keyword>
<keyword id="KW-0627">Porphyrin biosynthesis</keyword>
<keyword id="KW-1185">Reference proteome</keyword>
<gene>
    <name evidence="1" type="primary">hemE</name>
    <name type="ordered locus">DNO_1332</name>
</gene>
<accession>A5EX29</accession>
<organism>
    <name type="scientific">Dichelobacter nodosus (strain VCS1703A)</name>
    <dbReference type="NCBI Taxonomy" id="246195"/>
    <lineage>
        <taxon>Bacteria</taxon>
        <taxon>Pseudomonadati</taxon>
        <taxon>Pseudomonadota</taxon>
        <taxon>Gammaproteobacteria</taxon>
        <taxon>Cardiobacteriales</taxon>
        <taxon>Cardiobacteriaceae</taxon>
        <taxon>Dichelobacter</taxon>
    </lineage>
</organism>
<feature type="chain" id="PRO_0000325637" description="Uroporphyrinogen decarboxylase">
    <location>
        <begin position="1"/>
        <end position="345"/>
    </location>
</feature>
<feature type="binding site" evidence="1">
    <location>
        <begin position="24"/>
        <end position="28"/>
    </location>
    <ligand>
        <name>substrate</name>
    </ligand>
</feature>
<feature type="binding site" evidence="1">
    <location>
        <position position="74"/>
    </location>
    <ligand>
        <name>substrate</name>
    </ligand>
</feature>
<feature type="binding site" evidence="1">
    <location>
        <position position="150"/>
    </location>
    <ligand>
        <name>substrate</name>
    </ligand>
</feature>
<feature type="binding site" evidence="1">
    <location>
        <position position="205"/>
    </location>
    <ligand>
        <name>substrate</name>
    </ligand>
</feature>
<feature type="binding site" evidence="1">
    <location>
        <position position="318"/>
    </location>
    <ligand>
        <name>substrate</name>
    </ligand>
</feature>
<feature type="site" description="Transition state stabilizer" evidence="1">
    <location>
        <position position="74"/>
    </location>
</feature>
<dbReference type="EC" id="4.1.1.37" evidence="1"/>
<dbReference type="EMBL" id="CP000513">
    <property type="protein sequence ID" value="ABQ13348.1"/>
    <property type="molecule type" value="Genomic_DNA"/>
</dbReference>
<dbReference type="RefSeq" id="WP_012031616.1">
    <property type="nucleotide sequence ID" value="NC_009446.1"/>
</dbReference>
<dbReference type="SMR" id="A5EX29"/>
<dbReference type="STRING" id="246195.DNO_1332"/>
<dbReference type="KEGG" id="dno:DNO_1332"/>
<dbReference type="eggNOG" id="COG0407">
    <property type="taxonomic scope" value="Bacteria"/>
</dbReference>
<dbReference type="HOGENOM" id="CLU_040933_0_0_6"/>
<dbReference type="OrthoDB" id="9806656at2"/>
<dbReference type="UniPathway" id="UPA00251">
    <property type="reaction ID" value="UER00321"/>
</dbReference>
<dbReference type="Proteomes" id="UP000000248">
    <property type="component" value="Chromosome"/>
</dbReference>
<dbReference type="GO" id="GO:0005829">
    <property type="term" value="C:cytosol"/>
    <property type="evidence" value="ECO:0007669"/>
    <property type="project" value="TreeGrafter"/>
</dbReference>
<dbReference type="GO" id="GO:0004853">
    <property type="term" value="F:uroporphyrinogen decarboxylase activity"/>
    <property type="evidence" value="ECO:0007669"/>
    <property type="project" value="UniProtKB-UniRule"/>
</dbReference>
<dbReference type="GO" id="GO:0019353">
    <property type="term" value="P:protoporphyrinogen IX biosynthetic process from glutamate"/>
    <property type="evidence" value="ECO:0007669"/>
    <property type="project" value="TreeGrafter"/>
</dbReference>
<dbReference type="CDD" id="cd00717">
    <property type="entry name" value="URO-D"/>
    <property type="match status" value="1"/>
</dbReference>
<dbReference type="FunFam" id="3.20.20.210:FF:000001">
    <property type="entry name" value="Uroporphyrinogen decarboxylase"/>
    <property type="match status" value="1"/>
</dbReference>
<dbReference type="Gene3D" id="3.20.20.210">
    <property type="match status" value="1"/>
</dbReference>
<dbReference type="HAMAP" id="MF_00218">
    <property type="entry name" value="URO_D"/>
    <property type="match status" value="1"/>
</dbReference>
<dbReference type="InterPro" id="IPR038071">
    <property type="entry name" value="UROD/MetE-like_sf"/>
</dbReference>
<dbReference type="InterPro" id="IPR006361">
    <property type="entry name" value="Uroporphyrinogen_deCO2ase_HemE"/>
</dbReference>
<dbReference type="InterPro" id="IPR000257">
    <property type="entry name" value="Uroporphyrinogen_deCOase"/>
</dbReference>
<dbReference type="NCBIfam" id="TIGR01464">
    <property type="entry name" value="hemE"/>
    <property type="match status" value="1"/>
</dbReference>
<dbReference type="PANTHER" id="PTHR21091">
    <property type="entry name" value="METHYLTETRAHYDROFOLATE:HOMOCYSTEINE METHYLTRANSFERASE RELATED"/>
    <property type="match status" value="1"/>
</dbReference>
<dbReference type="PANTHER" id="PTHR21091:SF169">
    <property type="entry name" value="UROPORPHYRINOGEN DECARBOXYLASE"/>
    <property type="match status" value="1"/>
</dbReference>
<dbReference type="Pfam" id="PF01208">
    <property type="entry name" value="URO-D"/>
    <property type="match status" value="1"/>
</dbReference>
<dbReference type="SUPFAM" id="SSF51726">
    <property type="entry name" value="UROD/MetE-like"/>
    <property type="match status" value="1"/>
</dbReference>
<dbReference type="PROSITE" id="PS00906">
    <property type="entry name" value="UROD_1"/>
    <property type="match status" value="1"/>
</dbReference>
<dbReference type="PROSITE" id="PS00907">
    <property type="entry name" value="UROD_2"/>
    <property type="match status" value="1"/>
</dbReference>